<name>IGAA_ECOLI</name>
<comment type="subcellular location">
    <subcellularLocation>
        <location>Cell inner membrane</location>
        <topology>Multi-pass membrane protein</topology>
    </subcellularLocation>
</comment>
<comment type="similarity">
    <text evidence="2">Belongs to the IgaA family.</text>
</comment>
<dbReference type="EMBL" id="U18997">
    <property type="protein sequence ID" value="AAA58195.1"/>
    <property type="molecule type" value="Genomic_DNA"/>
</dbReference>
<dbReference type="EMBL" id="U00096">
    <property type="protein sequence ID" value="AAC76423.1"/>
    <property type="molecule type" value="Genomic_DNA"/>
</dbReference>
<dbReference type="EMBL" id="AP009048">
    <property type="protein sequence ID" value="BAE77893.1"/>
    <property type="molecule type" value="Genomic_DNA"/>
</dbReference>
<dbReference type="PIR" id="A65135">
    <property type="entry name" value="A65135"/>
</dbReference>
<dbReference type="RefSeq" id="NP_417857.1">
    <property type="nucleotide sequence ID" value="NC_000913.3"/>
</dbReference>
<dbReference type="PDB" id="4UZM">
    <property type="method" value="NMR"/>
    <property type="chains" value="A=36-154"/>
</dbReference>
<dbReference type="PDB" id="9BIY">
    <property type="method" value="X-ray"/>
    <property type="resolution" value="1.80 A"/>
    <property type="chains" value="A=374-647"/>
</dbReference>
<dbReference type="PDB" id="9BJ0">
    <property type="method" value="X-ray"/>
    <property type="resolution" value="2.64 A"/>
    <property type="chains" value="A/B=374-646"/>
</dbReference>
<dbReference type="PDBsum" id="4UZM"/>
<dbReference type="PDBsum" id="9BIY"/>
<dbReference type="PDBsum" id="9BJ0"/>
<dbReference type="BMRB" id="P45800"/>
<dbReference type="SMR" id="P45800"/>
<dbReference type="DIP" id="DIP-12922N"/>
<dbReference type="FunCoup" id="P45800">
    <property type="interactions" value="20"/>
</dbReference>
<dbReference type="IntAct" id="P45800">
    <property type="interactions" value="3"/>
</dbReference>
<dbReference type="STRING" id="511145.b3398"/>
<dbReference type="jPOST" id="P45800"/>
<dbReference type="PaxDb" id="511145-b3398"/>
<dbReference type="EnsemblBacteria" id="AAC76423">
    <property type="protein sequence ID" value="AAC76423"/>
    <property type="gene ID" value="b3398"/>
</dbReference>
<dbReference type="GeneID" id="947905"/>
<dbReference type="KEGG" id="ecj:JW3361"/>
<dbReference type="KEGG" id="eco:b3398"/>
<dbReference type="KEGG" id="ecoc:C3026_18435"/>
<dbReference type="PATRIC" id="fig|1411691.4.peg.3332"/>
<dbReference type="EchoBASE" id="EB2763"/>
<dbReference type="eggNOG" id="ENOG502Z8KK">
    <property type="taxonomic scope" value="Bacteria"/>
</dbReference>
<dbReference type="HOGENOM" id="CLU_014723_0_0_6"/>
<dbReference type="InParanoid" id="P45800"/>
<dbReference type="OMA" id="LIYPPHW"/>
<dbReference type="OrthoDB" id="8827178at2"/>
<dbReference type="PhylomeDB" id="P45800"/>
<dbReference type="BioCyc" id="EcoCyc:G7741-MONOMER"/>
<dbReference type="EvolutionaryTrace" id="P45800"/>
<dbReference type="PRO" id="PR:P45800"/>
<dbReference type="Proteomes" id="UP000000625">
    <property type="component" value="Chromosome"/>
</dbReference>
<dbReference type="GO" id="GO:0005886">
    <property type="term" value="C:plasma membrane"/>
    <property type="evidence" value="ECO:0000314"/>
    <property type="project" value="EcoCyc"/>
</dbReference>
<dbReference type="GO" id="GO:0000156">
    <property type="term" value="F:phosphorelay response regulator activity"/>
    <property type="evidence" value="ECO:0000315"/>
    <property type="project" value="EcoCyc"/>
</dbReference>
<dbReference type="GO" id="GO:0036460">
    <property type="term" value="P:cellular response to cell envelope stress"/>
    <property type="evidence" value="ECO:0000314"/>
    <property type="project" value="EcoCyc"/>
</dbReference>
<dbReference type="GO" id="GO:0070297">
    <property type="term" value="P:regulation of phosphorelay signal transduction system"/>
    <property type="evidence" value="ECO:0000314"/>
    <property type="project" value="EcoCyc"/>
</dbReference>
<dbReference type="InterPro" id="IPR010771">
    <property type="entry name" value="IgaA"/>
</dbReference>
<dbReference type="Pfam" id="PF07095">
    <property type="entry name" value="IgaA"/>
    <property type="match status" value="1"/>
</dbReference>
<evidence type="ECO:0000255" key="1"/>
<evidence type="ECO:0000305" key="2"/>
<evidence type="ECO:0007829" key="3">
    <source>
        <dbReference type="PDB" id="4UZM"/>
    </source>
</evidence>
<evidence type="ECO:0007829" key="4">
    <source>
        <dbReference type="PDB" id="9BIY"/>
    </source>
</evidence>
<protein>
    <recommendedName>
        <fullName>Putative membrane protein IgaA homolog</fullName>
    </recommendedName>
</protein>
<gene>
    <name type="primary">yrfF</name>
    <name type="ordered locus">b3398</name>
    <name type="ordered locus">JW3361</name>
</gene>
<sequence length="711" mass="79490">MSTIVIFLAALLACSLLAGWLIKVRSRRRQLPWTNAFADAQTRKLTPEERSAVENYLESLTQVLQVPGPTGASAAPISLALNAESNNVMMLTHAITRYGISTDDPNKWRYYLDSVEVHLPPFWEQYINDENTVELIHTDSLPLVISLNGHTLQEYMQETRSYALQPVPSTQASIRGEESEQIELLNIRKETHEEYALSRPRGLREALLIVASFLMFFFCLITPDVFVPWLAGGALLLLGAGLWGLFAPPAKSSLREIHCLRGTPRRWGLFGENDQEQINNISLGIIDLVYPAHWQPYIAQDLGQQTDIDIYLDRHVVRQGRYLSLHDEVKNFPLQHWLRSTIIAAGSLLVLFMLLFWIPLDMPLKFTLSWMKGAQTIEATSVKQLADAGVRVGDTLRISGTGMCNIRTSGTWSAKTNSPFLPFDCSQIIWNDARSLPLPESELVNKATALTEAVNRQLHPKPEDESRVSASLRSAIQKSGMVLLDDFGDIVLKTADLCSAKDDCVRLKNALVNLGNSKDWDALVKRANAGKLDGVNVLLRPVSAESLDNLVATSTAPFITHETARAAQSLNSPAPGGFLIVSDEGSDFVDQPWPSASLYDYPPQEQWNAFQKLAQMLMHTPFNAEGIVTKIFTDANGTQHIGLHPIPDRSGLWRYLSTTLLLLTMLGSAIYNGVQAWRRYQRHRTRMMEIQAYYESCLNPQLITPSESLIE</sequence>
<feature type="chain" id="PRO_0000215014" description="Putative membrane protein IgaA homolog">
    <location>
        <begin position="1"/>
        <end position="711"/>
    </location>
</feature>
<feature type="topological domain" description="Periplasmic" evidence="1">
    <location>
        <position position="1"/>
    </location>
</feature>
<feature type="transmembrane region" description="Helical" evidence="1">
    <location>
        <begin position="2"/>
        <end position="22"/>
    </location>
</feature>
<feature type="topological domain" description="Cytoplasmic" evidence="1">
    <location>
        <begin position="23"/>
        <end position="204"/>
    </location>
</feature>
<feature type="transmembrane region" description="Helical" evidence="1">
    <location>
        <begin position="205"/>
        <end position="225"/>
    </location>
</feature>
<feature type="transmembrane region" description="Helical" evidence="1">
    <location>
        <begin position="226"/>
        <end position="246"/>
    </location>
</feature>
<feature type="topological domain" description="Cytoplasmic" evidence="1">
    <location>
        <begin position="247"/>
        <end position="339"/>
    </location>
</feature>
<feature type="transmembrane region" description="Helical" evidence="1">
    <location>
        <begin position="340"/>
        <end position="360"/>
    </location>
</feature>
<feature type="topological domain" description="Periplasmic" evidence="1">
    <location>
        <begin position="361"/>
        <end position="655"/>
    </location>
</feature>
<feature type="transmembrane region" description="Helical" evidence="1">
    <location>
        <begin position="656"/>
        <end position="676"/>
    </location>
</feature>
<feature type="topological domain" description="Cytoplasmic" evidence="1">
    <location>
        <begin position="677"/>
        <end position="711"/>
    </location>
</feature>
<feature type="strand" evidence="3">
    <location>
        <begin position="41"/>
        <end position="44"/>
    </location>
</feature>
<feature type="helix" evidence="3">
    <location>
        <begin position="47"/>
        <end position="62"/>
    </location>
</feature>
<feature type="helix" evidence="3">
    <location>
        <begin position="83"/>
        <end position="86"/>
    </location>
</feature>
<feature type="strand" evidence="3">
    <location>
        <begin position="87"/>
        <end position="93"/>
    </location>
</feature>
<feature type="strand" evidence="3">
    <location>
        <begin position="95"/>
        <end position="98"/>
    </location>
</feature>
<feature type="strand" evidence="3">
    <location>
        <begin position="103"/>
        <end position="107"/>
    </location>
</feature>
<feature type="strand" evidence="3">
    <location>
        <begin position="109"/>
        <end position="112"/>
    </location>
</feature>
<feature type="strand" evidence="3">
    <location>
        <begin position="115"/>
        <end position="118"/>
    </location>
</feature>
<feature type="turn" evidence="3">
    <location>
        <begin position="124"/>
        <end position="126"/>
    </location>
</feature>
<feature type="strand" evidence="3">
    <location>
        <begin position="129"/>
        <end position="137"/>
    </location>
</feature>
<feature type="strand" evidence="3">
    <location>
        <begin position="139"/>
        <end position="147"/>
    </location>
</feature>
<feature type="strand" evidence="4">
    <location>
        <begin position="376"/>
        <end position="381"/>
    </location>
</feature>
<feature type="helix" evidence="4">
    <location>
        <begin position="382"/>
        <end position="386"/>
    </location>
</feature>
<feature type="strand" evidence="4">
    <location>
        <begin position="395"/>
        <end position="405"/>
    </location>
</feature>
<feature type="turn" evidence="4">
    <location>
        <begin position="419"/>
        <end position="422"/>
    </location>
</feature>
<feature type="strand" evidence="4">
    <location>
        <begin position="424"/>
        <end position="430"/>
    </location>
</feature>
<feature type="helix" evidence="4">
    <location>
        <begin position="442"/>
        <end position="458"/>
    </location>
</feature>
<feature type="helix" evidence="4">
    <location>
        <begin position="470"/>
        <end position="479"/>
    </location>
</feature>
<feature type="strand" evidence="4">
    <location>
        <begin position="482"/>
        <end position="485"/>
    </location>
</feature>
<feature type="helix" evidence="4">
    <location>
        <begin position="487"/>
        <end position="497"/>
    </location>
</feature>
<feature type="turn" evidence="4">
    <location>
        <begin position="501"/>
        <end position="504"/>
    </location>
</feature>
<feature type="helix" evidence="4">
    <location>
        <begin position="505"/>
        <end position="514"/>
    </location>
</feature>
<feature type="helix" evidence="4">
    <location>
        <begin position="520"/>
        <end position="529"/>
    </location>
</feature>
<feature type="turn" evidence="4">
    <location>
        <begin position="530"/>
        <end position="534"/>
    </location>
</feature>
<feature type="strand" evidence="4">
    <location>
        <begin position="536"/>
        <end position="539"/>
    </location>
</feature>
<feature type="helix" evidence="4">
    <location>
        <begin position="541"/>
        <end position="569"/>
    </location>
</feature>
<feature type="strand" evidence="4">
    <location>
        <begin position="575"/>
        <end position="582"/>
    </location>
</feature>
<feature type="helix" evidence="4">
    <location>
        <begin position="598"/>
        <end position="600"/>
    </location>
</feature>
<feature type="helix" evidence="4">
    <location>
        <begin position="603"/>
        <end position="617"/>
    </location>
</feature>
<feature type="strand" evidence="4">
    <location>
        <begin position="619"/>
        <end position="633"/>
    </location>
</feature>
<feature type="strand" evidence="4">
    <location>
        <begin position="639"/>
        <end position="644"/>
    </location>
</feature>
<organism>
    <name type="scientific">Escherichia coli (strain K12)</name>
    <dbReference type="NCBI Taxonomy" id="83333"/>
    <lineage>
        <taxon>Bacteria</taxon>
        <taxon>Pseudomonadati</taxon>
        <taxon>Pseudomonadota</taxon>
        <taxon>Gammaproteobacteria</taxon>
        <taxon>Enterobacterales</taxon>
        <taxon>Enterobacteriaceae</taxon>
        <taxon>Escherichia</taxon>
    </lineage>
</organism>
<keyword id="KW-0002">3D-structure</keyword>
<keyword id="KW-0997">Cell inner membrane</keyword>
<keyword id="KW-1003">Cell membrane</keyword>
<keyword id="KW-0472">Membrane</keyword>
<keyword id="KW-1185">Reference proteome</keyword>
<keyword id="KW-0812">Transmembrane</keyword>
<keyword id="KW-1133">Transmembrane helix</keyword>
<reference key="1">
    <citation type="journal article" date="1997" name="Science">
        <title>The complete genome sequence of Escherichia coli K-12.</title>
        <authorList>
            <person name="Blattner F.R."/>
            <person name="Plunkett G. III"/>
            <person name="Bloch C.A."/>
            <person name="Perna N.T."/>
            <person name="Burland V."/>
            <person name="Riley M."/>
            <person name="Collado-Vides J."/>
            <person name="Glasner J.D."/>
            <person name="Rode C.K."/>
            <person name="Mayhew G.F."/>
            <person name="Gregor J."/>
            <person name="Davis N.W."/>
            <person name="Kirkpatrick H.A."/>
            <person name="Goeden M.A."/>
            <person name="Rose D.J."/>
            <person name="Mau B."/>
            <person name="Shao Y."/>
        </authorList>
    </citation>
    <scope>NUCLEOTIDE SEQUENCE [LARGE SCALE GENOMIC DNA]</scope>
    <source>
        <strain>K12 / MG1655 / ATCC 47076</strain>
    </source>
</reference>
<reference key="2">
    <citation type="journal article" date="2006" name="Mol. Syst. Biol.">
        <title>Highly accurate genome sequences of Escherichia coli K-12 strains MG1655 and W3110.</title>
        <authorList>
            <person name="Hayashi K."/>
            <person name="Morooka N."/>
            <person name="Yamamoto Y."/>
            <person name="Fujita K."/>
            <person name="Isono K."/>
            <person name="Choi S."/>
            <person name="Ohtsubo E."/>
            <person name="Baba T."/>
            <person name="Wanner B.L."/>
            <person name="Mori H."/>
            <person name="Horiuchi T."/>
        </authorList>
    </citation>
    <scope>NUCLEOTIDE SEQUENCE [LARGE SCALE GENOMIC DNA]</scope>
    <source>
        <strain>K12 / W3110 / ATCC 27325 / DSM 5911</strain>
    </source>
</reference>
<reference key="3">
    <citation type="journal article" date="2005" name="Science">
        <title>Global topology analysis of the Escherichia coli inner membrane proteome.</title>
        <authorList>
            <person name="Daley D.O."/>
            <person name="Rapp M."/>
            <person name="Granseth E."/>
            <person name="Melen K."/>
            <person name="Drew D."/>
            <person name="von Heijne G."/>
        </authorList>
    </citation>
    <scope>TOPOLOGY [LARGE SCALE ANALYSIS]</scope>
    <source>
        <strain>K12 / MG1655 / ATCC 47076</strain>
    </source>
</reference>
<accession>P45800</accession>
<accession>Q2M763</accession>
<proteinExistence type="evidence at protein level"/>